<organism>
    <name type="scientific">Bifidobacterium longum (strain DJO10A)</name>
    <dbReference type="NCBI Taxonomy" id="205913"/>
    <lineage>
        <taxon>Bacteria</taxon>
        <taxon>Bacillati</taxon>
        <taxon>Actinomycetota</taxon>
        <taxon>Actinomycetes</taxon>
        <taxon>Bifidobacteriales</taxon>
        <taxon>Bifidobacteriaceae</taxon>
        <taxon>Bifidobacterium</taxon>
    </lineage>
</organism>
<dbReference type="EC" id="2.7.7.3" evidence="1"/>
<dbReference type="EMBL" id="CP000605">
    <property type="protein sequence ID" value="ACD98483.1"/>
    <property type="molecule type" value="Genomic_DNA"/>
</dbReference>
<dbReference type="RefSeq" id="WP_007051410.1">
    <property type="nucleotide sequence ID" value="NZ_AABM02000007.1"/>
</dbReference>
<dbReference type="SMR" id="B3DTL4"/>
<dbReference type="GeneID" id="69577566"/>
<dbReference type="KEGG" id="blj:BLD_1037"/>
<dbReference type="HOGENOM" id="CLU_100149_1_0_11"/>
<dbReference type="UniPathway" id="UPA00241">
    <property type="reaction ID" value="UER00355"/>
</dbReference>
<dbReference type="Proteomes" id="UP000002419">
    <property type="component" value="Chromosome"/>
</dbReference>
<dbReference type="GO" id="GO:0005737">
    <property type="term" value="C:cytoplasm"/>
    <property type="evidence" value="ECO:0007669"/>
    <property type="project" value="UniProtKB-SubCell"/>
</dbReference>
<dbReference type="GO" id="GO:0005524">
    <property type="term" value="F:ATP binding"/>
    <property type="evidence" value="ECO:0007669"/>
    <property type="project" value="UniProtKB-KW"/>
</dbReference>
<dbReference type="GO" id="GO:0004595">
    <property type="term" value="F:pantetheine-phosphate adenylyltransferase activity"/>
    <property type="evidence" value="ECO:0007669"/>
    <property type="project" value="UniProtKB-UniRule"/>
</dbReference>
<dbReference type="GO" id="GO:0015937">
    <property type="term" value="P:coenzyme A biosynthetic process"/>
    <property type="evidence" value="ECO:0007669"/>
    <property type="project" value="UniProtKB-UniRule"/>
</dbReference>
<dbReference type="CDD" id="cd02163">
    <property type="entry name" value="PPAT"/>
    <property type="match status" value="1"/>
</dbReference>
<dbReference type="Gene3D" id="3.40.50.620">
    <property type="entry name" value="HUPs"/>
    <property type="match status" value="1"/>
</dbReference>
<dbReference type="HAMAP" id="MF_00151">
    <property type="entry name" value="PPAT_bact"/>
    <property type="match status" value="1"/>
</dbReference>
<dbReference type="InterPro" id="IPR004821">
    <property type="entry name" value="Cyt_trans-like"/>
</dbReference>
<dbReference type="InterPro" id="IPR001980">
    <property type="entry name" value="PPAT"/>
</dbReference>
<dbReference type="InterPro" id="IPR014729">
    <property type="entry name" value="Rossmann-like_a/b/a_fold"/>
</dbReference>
<dbReference type="NCBIfam" id="TIGR01510">
    <property type="entry name" value="coaD_prev_kdtB"/>
    <property type="match status" value="1"/>
</dbReference>
<dbReference type="NCBIfam" id="TIGR00125">
    <property type="entry name" value="cyt_tran_rel"/>
    <property type="match status" value="1"/>
</dbReference>
<dbReference type="PANTHER" id="PTHR21342">
    <property type="entry name" value="PHOSPHOPANTETHEINE ADENYLYLTRANSFERASE"/>
    <property type="match status" value="1"/>
</dbReference>
<dbReference type="PANTHER" id="PTHR21342:SF1">
    <property type="entry name" value="PHOSPHOPANTETHEINE ADENYLYLTRANSFERASE"/>
    <property type="match status" value="1"/>
</dbReference>
<dbReference type="Pfam" id="PF01467">
    <property type="entry name" value="CTP_transf_like"/>
    <property type="match status" value="1"/>
</dbReference>
<dbReference type="PRINTS" id="PR01020">
    <property type="entry name" value="LPSBIOSNTHSS"/>
</dbReference>
<dbReference type="SUPFAM" id="SSF52374">
    <property type="entry name" value="Nucleotidylyl transferase"/>
    <property type="match status" value="1"/>
</dbReference>
<gene>
    <name evidence="1" type="primary">coaD</name>
    <name type="ordered locus">BLD_1037</name>
</gene>
<protein>
    <recommendedName>
        <fullName evidence="1">Phosphopantetheine adenylyltransferase</fullName>
        <ecNumber evidence="1">2.7.7.3</ecNumber>
    </recommendedName>
    <alternativeName>
        <fullName evidence="1">Dephospho-CoA pyrophosphorylase</fullName>
    </alternativeName>
    <alternativeName>
        <fullName evidence="1">Pantetheine-phosphate adenylyltransferase</fullName>
        <shortName evidence="1">PPAT</shortName>
    </alternativeName>
</protein>
<accession>B3DTL4</accession>
<keyword id="KW-0067">ATP-binding</keyword>
<keyword id="KW-0173">Coenzyme A biosynthesis</keyword>
<keyword id="KW-0963">Cytoplasm</keyword>
<keyword id="KW-0460">Magnesium</keyword>
<keyword id="KW-0547">Nucleotide-binding</keyword>
<keyword id="KW-0548">Nucleotidyltransferase</keyword>
<keyword id="KW-0808">Transferase</keyword>
<name>COAD_BIFLD</name>
<sequence length="166" mass="17838">MTIAVCPGSYDPVTAGHLDVIERSARFFDEVHVVVAVNAAKTPMFSEATRVDVIRRALDKAGCKNVTVSSTDGLITDYCKKVGATVIIKGLRQNGDYEAELGMALVNRKLAGIETLFLPADPILEHISSSIVKDVARHGGDVTGMVPDCVVPMLADALAEERQRKD</sequence>
<proteinExistence type="inferred from homology"/>
<feature type="chain" id="PRO_1000096764" description="Phosphopantetheine adenylyltransferase">
    <location>
        <begin position="1"/>
        <end position="166"/>
    </location>
</feature>
<feature type="binding site" evidence="1">
    <location>
        <begin position="9"/>
        <end position="10"/>
    </location>
    <ligand>
        <name>ATP</name>
        <dbReference type="ChEBI" id="CHEBI:30616"/>
    </ligand>
</feature>
<feature type="binding site" evidence="1">
    <location>
        <position position="9"/>
    </location>
    <ligand>
        <name>substrate</name>
    </ligand>
</feature>
<feature type="binding site" evidence="1">
    <location>
        <position position="17"/>
    </location>
    <ligand>
        <name>ATP</name>
        <dbReference type="ChEBI" id="CHEBI:30616"/>
    </ligand>
</feature>
<feature type="binding site" evidence="1">
    <location>
        <position position="41"/>
    </location>
    <ligand>
        <name>substrate</name>
    </ligand>
</feature>
<feature type="binding site" evidence="1">
    <location>
        <position position="75"/>
    </location>
    <ligand>
        <name>substrate</name>
    </ligand>
</feature>
<feature type="binding site" evidence="1">
    <location>
        <position position="89"/>
    </location>
    <ligand>
        <name>substrate</name>
    </ligand>
</feature>
<feature type="binding site" evidence="1">
    <location>
        <begin position="90"/>
        <end position="92"/>
    </location>
    <ligand>
        <name>ATP</name>
        <dbReference type="ChEBI" id="CHEBI:30616"/>
    </ligand>
</feature>
<feature type="binding site" evidence="1">
    <location>
        <position position="100"/>
    </location>
    <ligand>
        <name>ATP</name>
        <dbReference type="ChEBI" id="CHEBI:30616"/>
    </ligand>
</feature>
<feature type="binding site" evidence="1">
    <location>
        <begin position="124"/>
        <end position="130"/>
    </location>
    <ligand>
        <name>ATP</name>
        <dbReference type="ChEBI" id="CHEBI:30616"/>
    </ligand>
</feature>
<feature type="site" description="Transition state stabilizer" evidence="1">
    <location>
        <position position="17"/>
    </location>
</feature>
<reference key="1">
    <citation type="journal article" date="2008" name="BMC Genomics">
        <title>Comparative genomic analysis of the gut bacterium Bifidobacterium longum reveals loci susceptible to deletion during pure culture growth.</title>
        <authorList>
            <person name="Lee J.H."/>
            <person name="Karamychev V.N."/>
            <person name="Kozyavkin S.A."/>
            <person name="Mills D."/>
            <person name="Pavlov A.R."/>
            <person name="Pavlova N.V."/>
            <person name="Polouchine N.N."/>
            <person name="Richardson P.M."/>
            <person name="Shakhova V.V."/>
            <person name="Slesarev A.I."/>
            <person name="Weimer B."/>
            <person name="O'Sullivan D.J."/>
        </authorList>
    </citation>
    <scope>NUCLEOTIDE SEQUENCE [LARGE SCALE GENOMIC DNA]</scope>
    <source>
        <strain>DJO10A</strain>
    </source>
</reference>
<comment type="function">
    <text evidence="1">Reversibly transfers an adenylyl group from ATP to 4'-phosphopantetheine, yielding dephospho-CoA (dPCoA) and pyrophosphate.</text>
</comment>
<comment type="catalytic activity">
    <reaction evidence="1">
        <text>(R)-4'-phosphopantetheine + ATP + H(+) = 3'-dephospho-CoA + diphosphate</text>
        <dbReference type="Rhea" id="RHEA:19801"/>
        <dbReference type="ChEBI" id="CHEBI:15378"/>
        <dbReference type="ChEBI" id="CHEBI:30616"/>
        <dbReference type="ChEBI" id="CHEBI:33019"/>
        <dbReference type="ChEBI" id="CHEBI:57328"/>
        <dbReference type="ChEBI" id="CHEBI:61723"/>
        <dbReference type="EC" id="2.7.7.3"/>
    </reaction>
</comment>
<comment type="cofactor">
    <cofactor evidence="1">
        <name>Mg(2+)</name>
        <dbReference type="ChEBI" id="CHEBI:18420"/>
    </cofactor>
</comment>
<comment type="pathway">
    <text evidence="1">Cofactor biosynthesis; coenzyme A biosynthesis; CoA from (R)-pantothenate: step 4/5.</text>
</comment>
<comment type="subunit">
    <text evidence="1">Homohexamer.</text>
</comment>
<comment type="subcellular location">
    <subcellularLocation>
        <location evidence="1">Cytoplasm</location>
    </subcellularLocation>
</comment>
<comment type="similarity">
    <text evidence="1">Belongs to the bacterial CoaD family.</text>
</comment>
<evidence type="ECO:0000255" key="1">
    <source>
        <dbReference type="HAMAP-Rule" id="MF_00151"/>
    </source>
</evidence>